<keyword id="KW-0021">Allosteric enzyme</keyword>
<keyword id="KW-0328">Glycosyltransferase</keyword>
<keyword id="KW-0342">GTP-binding</keyword>
<keyword id="KW-0460">Magnesium</keyword>
<keyword id="KW-0547">Nucleotide-binding</keyword>
<keyword id="KW-0808">Transferase</keyword>
<evidence type="ECO:0000250" key="1"/>
<evidence type="ECO:0000305" key="2"/>
<accession>Q9PJJ6</accession>
<comment type="function">
    <text evidence="1">Catalyzes the conversion of uracil and 5-phospho-alpha-D-ribose 1-diphosphate (PRPP) to UMP and diphosphate.</text>
</comment>
<comment type="catalytic activity">
    <reaction>
        <text>UMP + diphosphate = 5-phospho-alpha-D-ribose 1-diphosphate + uracil</text>
        <dbReference type="Rhea" id="RHEA:13017"/>
        <dbReference type="ChEBI" id="CHEBI:17568"/>
        <dbReference type="ChEBI" id="CHEBI:33019"/>
        <dbReference type="ChEBI" id="CHEBI:57865"/>
        <dbReference type="ChEBI" id="CHEBI:58017"/>
        <dbReference type="EC" id="2.4.2.9"/>
    </reaction>
</comment>
<comment type="cofactor">
    <cofactor evidence="1">
        <name>Mg(2+)</name>
        <dbReference type="ChEBI" id="CHEBI:18420"/>
    </cofactor>
    <text evidence="1">Binds 1 Mg(2+) ion per subunit. The magnesium is bound as Mg-PRPP.</text>
</comment>
<comment type="activity regulation">
    <text evidence="1">Allosterically activated by GTP.</text>
</comment>
<comment type="pathway">
    <text>Pyrimidine metabolism; UMP biosynthesis via salvage pathway; UMP from uracil: step 1/1.</text>
</comment>
<comment type="similarity">
    <text evidence="2">Belongs to the UPRTase family.</text>
</comment>
<sequence>MHIIMKTILATLCLILCASCCSKGACETRIKHTFSEKKFQKYSPVPKHPLSEQTHLYAKSCSIELEQTQLPTSTLTRYVSSTPTDSLSSKPLAAVYVLSHPLIQHKASLLRNKNTKSKIFRECLKEISLGVCYEATRDLALKNISIQTPLMQAECPHLTGTKIVVIPVLRAGLGMVDGFLALVPNAKVGLIGMSRNHETFQPSSYCCKLPEDIADCHVFIVDPMLATGGSASATIQLVKEHGAKNITLLNVLAVPEGIERIQKDHPDVTIYVASLDEKLNESAYILPGLGDAGDRLCGTSNPS</sequence>
<dbReference type="EC" id="2.4.2.9"/>
<dbReference type="EMBL" id="AE002160">
    <property type="protein sequence ID" value="AAF39633.1"/>
    <property type="molecule type" value="Genomic_DNA"/>
</dbReference>
<dbReference type="PIR" id="H81658">
    <property type="entry name" value="H81658"/>
</dbReference>
<dbReference type="SMR" id="Q9PJJ6"/>
<dbReference type="KEGG" id="cmu:TC_0833"/>
<dbReference type="eggNOG" id="COG0035">
    <property type="taxonomic scope" value="Bacteria"/>
</dbReference>
<dbReference type="HOGENOM" id="CLU_067096_2_2_0"/>
<dbReference type="UniPathway" id="UPA00574">
    <property type="reaction ID" value="UER00636"/>
</dbReference>
<dbReference type="Proteomes" id="UP000000800">
    <property type="component" value="Chromosome"/>
</dbReference>
<dbReference type="GO" id="GO:0005525">
    <property type="term" value="F:GTP binding"/>
    <property type="evidence" value="ECO:0007669"/>
    <property type="project" value="UniProtKB-KW"/>
</dbReference>
<dbReference type="GO" id="GO:0000287">
    <property type="term" value="F:magnesium ion binding"/>
    <property type="evidence" value="ECO:0007669"/>
    <property type="project" value="UniProtKB-UniRule"/>
</dbReference>
<dbReference type="GO" id="GO:0004845">
    <property type="term" value="F:uracil phosphoribosyltransferase activity"/>
    <property type="evidence" value="ECO:0007669"/>
    <property type="project" value="UniProtKB-UniRule"/>
</dbReference>
<dbReference type="GO" id="GO:0044206">
    <property type="term" value="P:UMP salvage"/>
    <property type="evidence" value="ECO:0007669"/>
    <property type="project" value="UniProtKB-UniRule"/>
</dbReference>
<dbReference type="GO" id="GO:0006223">
    <property type="term" value="P:uracil salvage"/>
    <property type="evidence" value="ECO:0007669"/>
    <property type="project" value="InterPro"/>
</dbReference>
<dbReference type="CDD" id="cd06223">
    <property type="entry name" value="PRTases_typeI"/>
    <property type="match status" value="1"/>
</dbReference>
<dbReference type="FunFam" id="3.40.50.2020:FF:000003">
    <property type="entry name" value="Uracil phosphoribosyltransferase"/>
    <property type="match status" value="1"/>
</dbReference>
<dbReference type="Gene3D" id="3.40.50.2020">
    <property type="match status" value="1"/>
</dbReference>
<dbReference type="HAMAP" id="MF_01218_B">
    <property type="entry name" value="Upp_B"/>
    <property type="match status" value="1"/>
</dbReference>
<dbReference type="InterPro" id="IPR000836">
    <property type="entry name" value="PRibTrfase_dom"/>
</dbReference>
<dbReference type="InterPro" id="IPR029057">
    <property type="entry name" value="PRTase-like"/>
</dbReference>
<dbReference type="InterPro" id="IPR034332">
    <property type="entry name" value="Upp_B"/>
</dbReference>
<dbReference type="InterPro" id="IPR050054">
    <property type="entry name" value="UPRTase/APRTase"/>
</dbReference>
<dbReference type="InterPro" id="IPR005765">
    <property type="entry name" value="Ura_phspho_trans"/>
</dbReference>
<dbReference type="NCBIfam" id="NF001097">
    <property type="entry name" value="PRK00129.1"/>
    <property type="match status" value="1"/>
</dbReference>
<dbReference type="NCBIfam" id="TIGR01091">
    <property type="entry name" value="upp"/>
    <property type="match status" value="1"/>
</dbReference>
<dbReference type="PANTHER" id="PTHR32315">
    <property type="entry name" value="ADENINE PHOSPHORIBOSYLTRANSFERASE"/>
    <property type="match status" value="1"/>
</dbReference>
<dbReference type="PANTHER" id="PTHR32315:SF4">
    <property type="entry name" value="URACIL PHOSPHORIBOSYLTRANSFERASE, CHLOROPLASTIC"/>
    <property type="match status" value="1"/>
</dbReference>
<dbReference type="Pfam" id="PF14681">
    <property type="entry name" value="UPRTase"/>
    <property type="match status" value="1"/>
</dbReference>
<dbReference type="SUPFAM" id="SSF53271">
    <property type="entry name" value="PRTase-like"/>
    <property type="match status" value="1"/>
</dbReference>
<name>UPP_CHLMU</name>
<gene>
    <name type="primary">upp</name>
    <name type="ordered locus">TC_0833</name>
</gene>
<protein>
    <recommendedName>
        <fullName>Uracil phosphoribosyltransferase</fullName>
        <ecNumber>2.4.2.9</ecNumber>
    </recommendedName>
    <alternativeName>
        <fullName>UMP pyrophosphorylase</fullName>
    </alternativeName>
    <alternativeName>
        <fullName>UPRTase</fullName>
    </alternativeName>
</protein>
<reference key="1">
    <citation type="journal article" date="2000" name="Nucleic Acids Res.">
        <title>Genome sequences of Chlamydia trachomatis MoPn and Chlamydia pneumoniae AR39.</title>
        <authorList>
            <person name="Read T.D."/>
            <person name="Brunham R.C."/>
            <person name="Shen C."/>
            <person name="Gill S.R."/>
            <person name="Heidelberg J.F."/>
            <person name="White O."/>
            <person name="Hickey E.K."/>
            <person name="Peterson J.D."/>
            <person name="Utterback T.R."/>
            <person name="Berry K.J."/>
            <person name="Bass S."/>
            <person name="Linher K.D."/>
            <person name="Weidman J.F."/>
            <person name="Khouri H.M."/>
            <person name="Craven B."/>
            <person name="Bowman C."/>
            <person name="Dodson R.J."/>
            <person name="Gwinn M.L."/>
            <person name="Nelson W.C."/>
            <person name="DeBoy R.T."/>
            <person name="Kolonay J.F."/>
            <person name="McClarty G."/>
            <person name="Salzberg S.L."/>
            <person name="Eisen J.A."/>
            <person name="Fraser C.M."/>
        </authorList>
    </citation>
    <scope>NUCLEOTIDE SEQUENCE [LARGE SCALE GENOMIC DNA]</scope>
    <source>
        <strain>MoPn / Nigg</strain>
    </source>
</reference>
<organism>
    <name type="scientific">Chlamydia muridarum (strain MoPn / Nigg)</name>
    <dbReference type="NCBI Taxonomy" id="243161"/>
    <lineage>
        <taxon>Bacteria</taxon>
        <taxon>Pseudomonadati</taxon>
        <taxon>Chlamydiota</taxon>
        <taxon>Chlamydiia</taxon>
        <taxon>Chlamydiales</taxon>
        <taxon>Chlamydiaceae</taxon>
        <taxon>Chlamydia/Chlamydophila group</taxon>
        <taxon>Chlamydia</taxon>
    </lineage>
</organism>
<feature type="chain" id="PRO_0000120813" description="Uracil phosphoribosyltransferase">
    <location>
        <begin position="1"/>
        <end position="303"/>
    </location>
</feature>
<feature type="region of interest" description="Unknown">
    <location>
        <begin position="1"/>
        <end position="86"/>
    </location>
</feature>
<feature type="region of interest" description="UPRTase">
    <location>
        <begin position="87"/>
        <end position="303"/>
    </location>
</feature>
<feature type="binding site" evidence="1">
    <location>
        <position position="170"/>
    </location>
    <ligand>
        <name>5-phospho-alpha-D-ribose 1-diphosphate</name>
        <dbReference type="ChEBI" id="CHEBI:58017"/>
    </ligand>
</feature>
<feature type="binding site" evidence="1">
    <location>
        <position position="195"/>
    </location>
    <ligand>
        <name>5-phospho-alpha-D-ribose 1-diphosphate</name>
        <dbReference type="ChEBI" id="CHEBI:58017"/>
    </ligand>
</feature>
<feature type="binding site" evidence="1">
    <location>
        <begin position="222"/>
        <end position="230"/>
    </location>
    <ligand>
        <name>5-phospho-alpha-D-ribose 1-diphosphate</name>
        <dbReference type="ChEBI" id="CHEBI:58017"/>
    </ligand>
</feature>
<feature type="binding site" evidence="1">
    <location>
        <position position="285"/>
    </location>
    <ligand>
        <name>uracil</name>
        <dbReference type="ChEBI" id="CHEBI:17568"/>
    </ligand>
</feature>
<feature type="binding site" evidence="1">
    <location>
        <begin position="290"/>
        <end position="292"/>
    </location>
    <ligand>
        <name>uracil</name>
        <dbReference type="ChEBI" id="CHEBI:17568"/>
    </ligand>
</feature>
<feature type="binding site" evidence="1">
    <location>
        <position position="291"/>
    </location>
    <ligand>
        <name>5-phospho-alpha-D-ribose 1-diphosphate</name>
        <dbReference type="ChEBI" id="CHEBI:58017"/>
    </ligand>
</feature>
<proteinExistence type="inferred from homology"/>